<evidence type="ECO:0000255" key="1">
    <source>
        <dbReference type="HAMAP-Rule" id="MF_00040"/>
    </source>
</evidence>
<accession>B2VE11</accession>
<dbReference type="EMBL" id="CU468135">
    <property type="protein sequence ID" value="CAO95939.1"/>
    <property type="molecule type" value="Genomic_DNA"/>
</dbReference>
<dbReference type="RefSeq" id="WP_012440641.1">
    <property type="nucleotide sequence ID" value="NC_010694.1"/>
</dbReference>
<dbReference type="SMR" id="B2VE11"/>
<dbReference type="STRING" id="465817.ETA_08930"/>
<dbReference type="KEGG" id="eta:ETA_08930"/>
<dbReference type="eggNOG" id="COG0233">
    <property type="taxonomic scope" value="Bacteria"/>
</dbReference>
<dbReference type="HOGENOM" id="CLU_073981_2_1_6"/>
<dbReference type="OrthoDB" id="9804006at2"/>
<dbReference type="Proteomes" id="UP000001726">
    <property type="component" value="Chromosome"/>
</dbReference>
<dbReference type="GO" id="GO:0005829">
    <property type="term" value="C:cytosol"/>
    <property type="evidence" value="ECO:0007669"/>
    <property type="project" value="GOC"/>
</dbReference>
<dbReference type="GO" id="GO:0043023">
    <property type="term" value="F:ribosomal large subunit binding"/>
    <property type="evidence" value="ECO:0007669"/>
    <property type="project" value="TreeGrafter"/>
</dbReference>
<dbReference type="GO" id="GO:0002184">
    <property type="term" value="P:cytoplasmic translational termination"/>
    <property type="evidence" value="ECO:0007669"/>
    <property type="project" value="TreeGrafter"/>
</dbReference>
<dbReference type="CDD" id="cd00520">
    <property type="entry name" value="RRF"/>
    <property type="match status" value="1"/>
</dbReference>
<dbReference type="FunFam" id="1.10.132.20:FF:000001">
    <property type="entry name" value="Ribosome-recycling factor"/>
    <property type="match status" value="1"/>
</dbReference>
<dbReference type="FunFam" id="3.30.1360.40:FF:000001">
    <property type="entry name" value="Ribosome-recycling factor"/>
    <property type="match status" value="1"/>
</dbReference>
<dbReference type="Gene3D" id="3.30.1360.40">
    <property type="match status" value="1"/>
</dbReference>
<dbReference type="Gene3D" id="1.10.132.20">
    <property type="entry name" value="Ribosome-recycling factor"/>
    <property type="match status" value="1"/>
</dbReference>
<dbReference type="HAMAP" id="MF_00040">
    <property type="entry name" value="RRF"/>
    <property type="match status" value="1"/>
</dbReference>
<dbReference type="InterPro" id="IPR002661">
    <property type="entry name" value="Ribosome_recyc_fac"/>
</dbReference>
<dbReference type="InterPro" id="IPR023584">
    <property type="entry name" value="Ribosome_recyc_fac_dom"/>
</dbReference>
<dbReference type="InterPro" id="IPR036191">
    <property type="entry name" value="RRF_sf"/>
</dbReference>
<dbReference type="NCBIfam" id="TIGR00496">
    <property type="entry name" value="frr"/>
    <property type="match status" value="1"/>
</dbReference>
<dbReference type="PANTHER" id="PTHR20982:SF3">
    <property type="entry name" value="MITOCHONDRIAL RIBOSOME RECYCLING FACTOR PSEUDO 1"/>
    <property type="match status" value="1"/>
</dbReference>
<dbReference type="PANTHER" id="PTHR20982">
    <property type="entry name" value="RIBOSOME RECYCLING FACTOR"/>
    <property type="match status" value="1"/>
</dbReference>
<dbReference type="Pfam" id="PF01765">
    <property type="entry name" value="RRF"/>
    <property type="match status" value="1"/>
</dbReference>
<dbReference type="SUPFAM" id="SSF55194">
    <property type="entry name" value="Ribosome recycling factor, RRF"/>
    <property type="match status" value="1"/>
</dbReference>
<reference key="1">
    <citation type="journal article" date="2008" name="Environ. Microbiol.">
        <title>The genome of Erwinia tasmaniensis strain Et1/99, a non-pathogenic bacterium in the genus Erwinia.</title>
        <authorList>
            <person name="Kube M."/>
            <person name="Migdoll A.M."/>
            <person name="Mueller I."/>
            <person name="Kuhl H."/>
            <person name="Beck A."/>
            <person name="Reinhardt R."/>
            <person name="Geider K."/>
        </authorList>
    </citation>
    <scope>NUCLEOTIDE SEQUENCE [LARGE SCALE GENOMIC DNA]</scope>
    <source>
        <strain>DSM 17950 / CFBP 7177 / CIP 109463 / NCPPB 4357 / Et1/99</strain>
    </source>
</reference>
<name>RRF_ERWT9</name>
<feature type="chain" id="PRO_1000090740" description="Ribosome-recycling factor">
    <location>
        <begin position="1"/>
        <end position="185"/>
    </location>
</feature>
<sequence>MINDIKKDAETRMEKCVEAFRNHISKIRTGRASPSILDGIMVDYYGSATPLRQLASVTVEDSRTLKINVFDRSIGAAVEKAIMTSDLGLNPSSAGSDIRVPLPALTEERRKDLIKVVRGEAEQGRVSVRNVRRDANDKLKALLKDKEISEDDDRRAQEDVQKMTDIFIKKVDAALADKETELMDF</sequence>
<proteinExistence type="inferred from homology"/>
<protein>
    <recommendedName>
        <fullName evidence="1">Ribosome-recycling factor</fullName>
        <shortName evidence="1">RRF</shortName>
    </recommendedName>
    <alternativeName>
        <fullName evidence="1">Ribosome-releasing factor</fullName>
    </alternativeName>
</protein>
<gene>
    <name evidence="1" type="primary">frr</name>
    <name type="ordered locus">ETA_08930</name>
</gene>
<keyword id="KW-0963">Cytoplasm</keyword>
<keyword id="KW-0648">Protein biosynthesis</keyword>
<keyword id="KW-1185">Reference proteome</keyword>
<comment type="function">
    <text evidence="1">Responsible for the release of ribosomes from messenger RNA at the termination of protein biosynthesis. May increase the efficiency of translation by recycling ribosomes from one round of translation to another.</text>
</comment>
<comment type="subcellular location">
    <subcellularLocation>
        <location evidence="1">Cytoplasm</location>
    </subcellularLocation>
</comment>
<comment type="similarity">
    <text evidence="1">Belongs to the RRF family.</text>
</comment>
<organism>
    <name type="scientific">Erwinia tasmaniensis (strain DSM 17950 / CFBP 7177 / CIP 109463 / NCPPB 4357 / Et1/99)</name>
    <dbReference type="NCBI Taxonomy" id="465817"/>
    <lineage>
        <taxon>Bacteria</taxon>
        <taxon>Pseudomonadati</taxon>
        <taxon>Pseudomonadota</taxon>
        <taxon>Gammaproteobacteria</taxon>
        <taxon>Enterobacterales</taxon>
        <taxon>Erwiniaceae</taxon>
        <taxon>Erwinia</taxon>
    </lineage>
</organism>